<name>PB2_I85A3</name>
<proteinExistence type="inferred from homology"/>
<dbReference type="EMBL" id="CY015026">
    <property type="protein sequence ID" value="ABI85028.1"/>
    <property type="molecule type" value="Genomic_RNA"/>
</dbReference>
<dbReference type="SMR" id="Q0A2Q4"/>
<dbReference type="GO" id="GO:0042025">
    <property type="term" value="C:host cell nucleus"/>
    <property type="evidence" value="ECO:0007669"/>
    <property type="project" value="UniProtKB-SubCell"/>
</dbReference>
<dbReference type="GO" id="GO:0044423">
    <property type="term" value="C:virion component"/>
    <property type="evidence" value="ECO:0007669"/>
    <property type="project" value="UniProtKB-UniRule"/>
</dbReference>
<dbReference type="GO" id="GO:0003723">
    <property type="term" value="F:RNA binding"/>
    <property type="evidence" value="ECO:0007669"/>
    <property type="project" value="UniProtKB-UniRule"/>
</dbReference>
<dbReference type="GO" id="GO:0003968">
    <property type="term" value="F:RNA-directed RNA polymerase activity"/>
    <property type="evidence" value="ECO:0007669"/>
    <property type="project" value="UniProtKB-UniRule"/>
</dbReference>
<dbReference type="GO" id="GO:0006370">
    <property type="term" value="P:7-methylguanosine mRNA capping"/>
    <property type="evidence" value="ECO:0007669"/>
    <property type="project" value="UniProtKB-UniRule"/>
</dbReference>
<dbReference type="GO" id="GO:0075526">
    <property type="term" value="P:cap snatching"/>
    <property type="evidence" value="ECO:0007669"/>
    <property type="project" value="UniProtKB-UniRule"/>
</dbReference>
<dbReference type="GO" id="GO:0006351">
    <property type="term" value="P:DNA-templated transcription"/>
    <property type="evidence" value="ECO:0007669"/>
    <property type="project" value="UniProtKB-UniRule"/>
</dbReference>
<dbReference type="GO" id="GO:0039657">
    <property type="term" value="P:symbiont-mediated suppression of host gene expression"/>
    <property type="evidence" value="ECO:0007669"/>
    <property type="project" value="UniProtKB-KW"/>
</dbReference>
<dbReference type="GO" id="GO:0039523">
    <property type="term" value="P:symbiont-mediated suppression of host mRNA transcription via inhibition of RNA polymerase II activity"/>
    <property type="evidence" value="ECO:0007669"/>
    <property type="project" value="UniProtKB-UniRule"/>
</dbReference>
<dbReference type="GO" id="GO:0039694">
    <property type="term" value="P:viral RNA genome replication"/>
    <property type="evidence" value="ECO:0007669"/>
    <property type="project" value="InterPro"/>
</dbReference>
<dbReference type="FunFam" id="3.30.30.90:FF:000001">
    <property type="entry name" value="Polymerase basic protein 2"/>
    <property type="match status" value="1"/>
</dbReference>
<dbReference type="Gene3D" id="3.30.30.90">
    <property type="entry name" value="Polymerase Basic Protein 2, C-terminal domain"/>
    <property type="match status" value="1"/>
</dbReference>
<dbReference type="HAMAP" id="MF_04062">
    <property type="entry name" value="INV_PB2"/>
    <property type="match status" value="1"/>
</dbReference>
<dbReference type="InterPro" id="IPR049110">
    <property type="entry name" value="Flu_PB2_2nd"/>
</dbReference>
<dbReference type="InterPro" id="IPR049114">
    <property type="entry name" value="Flu_PB2_6th"/>
</dbReference>
<dbReference type="InterPro" id="IPR049115">
    <property type="entry name" value="Flu_PB2_C"/>
</dbReference>
<dbReference type="InterPro" id="IPR048298">
    <property type="entry name" value="Flu_PB2_CAP-bd"/>
</dbReference>
<dbReference type="InterPro" id="IPR049111">
    <property type="entry name" value="Flu_PB2_middle"/>
</dbReference>
<dbReference type="InterPro" id="IPR049106">
    <property type="entry name" value="Flu_PB2_N"/>
</dbReference>
<dbReference type="InterPro" id="IPR001591">
    <property type="entry name" value="INV_PB2"/>
</dbReference>
<dbReference type="InterPro" id="IPR049113">
    <property type="entry name" value="PB2_helical"/>
</dbReference>
<dbReference type="InterPro" id="IPR037258">
    <property type="entry name" value="PDB2_C"/>
</dbReference>
<dbReference type="Pfam" id="PF20947">
    <property type="entry name" value="Flu_PB2_1st"/>
    <property type="match status" value="1"/>
</dbReference>
<dbReference type="Pfam" id="PF20948">
    <property type="entry name" value="Flu_PB2_2nd"/>
    <property type="match status" value="1"/>
</dbReference>
<dbReference type="Pfam" id="PF20949">
    <property type="entry name" value="Flu_PB2_3rd"/>
    <property type="match status" value="1"/>
</dbReference>
<dbReference type="Pfam" id="PF20950">
    <property type="entry name" value="Flu_PB2_4th"/>
    <property type="match status" value="1"/>
</dbReference>
<dbReference type="Pfam" id="PF00604">
    <property type="entry name" value="Flu_PB2_5th"/>
    <property type="match status" value="1"/>
</dbReference>
<dbReference type="Pfam" id="PF20951">
    <property type="entry name" value="Flu_PB2_6th"/>
    <property type="match status" value="1"/>
</dbReference>
<dbReference type="Pfam" id="PF20952">
    <property type="entry name" value="Flu_PB2_7th"/>
    <property type="match status" value="1"/>
</dbReference>
<dbReference type="SUPFAM" id="SSF160453">
    <property type="entry name" value="PB2 C-terminal domain-like"/>
    <property type="match status" value="1"/>
</dbReference>
<accession>Q0A2Q4</accession>
<reference key="1">
    <citation type="journal article" date="2006" name="Science">
        <title>Large-scale sequence analysis of avian influenza isolates.</title>
        <authorList>
            <person name="Obenauer J.C."/>
            <person name="Denson J."/>
            <person name="Mehta P.K."/>
            <person name="Su X."/>
            <person name="Mukatira S."/>
            <person name="Finkelstein D.B."/>
            <person name="Xu X."/>
            <person name="Wang J."/>
            <person name="Ma J."/>
            <person name="Fan Y."/>
            <person name="Rakestraw K.M."/>
            <person name="Webster R.G."/>
            <person name="Hoffmann E."/>
            <person name="Krauss S."/>
            <person name="Zheng J."/>
            <person name="Zhang Z."/>
            <person name="Naeve C.W."/>
        </authorList>
    </citation>
    <scope>NUCLEOTIDE SEQUENCE [GENOMIC RNA]</scope>
</reference>
<evidence type="ECO:0000255" key="1">
    <source>
        <dbReference type="HAMAP-Rule" id="MF_04062"/>
    </source>
</evidence>
<organism>
    <name type="scientific">Influenza A virus (strain A/Chicken/Victoria/1/1985 H7N7)</name>
    <dbReference type="NCBI Taxonomy" id="402520"/>
    <lineage>
        <taxon>Viruses</taxon>
        <taxon>Riboviria</taxon>
        <taxon>Orthornavirae</taxon>
        <taxon>Negarnaviricota</taxon>
        <taxon>Polyploviricotina</taxon>
        <taxon>Insthoviricetes</taxon>
        <taxon>Articulavirales</taxon>
        <taxon>Orthomyxoviridae</taxon>
        <taxon>Alphainfluenzavirus</taxon>
        <taxon>Alphainfluenzavirus influenzae</taxon>
        <taxon>Influenza A virus</taxon>
    </lineage>
</organism>
<gene>
    <name evidence="1" type="primary">PB2</name>
</gene>
<protein>
    <recommendedName>
        <fullName evidence="1">Polymerase basic protein 2</fullName>
    </recommendedName>
    <alternativeName>
        <fullName evidence="1">RNA-directed RNA polymerase subunit P3</fullName>
    </alternativeName>
</protein>
<organismHost>
    <name type="scientific">Aves</name>
    <dbReference type="NCBI Taxonomy" id="8782"/>
</organismHost>
<organismHost>
    <name type="scientific">Equus caballus</name>
    <name type="common">Horse</name>
    <dbReference type="NCBI Taxonomy" id="9796"/>
</organismHost>
<organismHost>
    <name type="scientific">Homo sapiens</name>
    <name type="common">Human</name>
    <dbReference type="NCBI Taxonomy" id="9606"/>
</organismHost>
<organismHost>
    <name type="scientific">Phocidae</name>
    <name type="common">true seals</name>
    <dbReference type="NCBI Taxonomy" id="9709"/>
</organismHost>
<comment type="function">
    <text evidence="1">Plays an essential role in transcription initiation and cap-stealing mechanism, in which cellular capped pre-mRNAs are used to generate primers for viral transcription. Recognizes and binds the 7-methylguanosine-containing cap of the target pre-RNA which is subsequently cleaved after 10-13 nucleotides by the viral protein PA. Plays a role in the initiation of the viral genome replication and modulates the activity of the ribonucleoprotein (RNP) complex.</text>
</comment>
<comment type="subunit">
    <text evidence="1">Influenza RNA polymerase is composed of three subunits: PB1, PB2 and PA. Interacts (via N-terminus) with PB1 (via C-terminus). Interacts with nucleoprotein NP (via N-terminus).</text>
</comment>
<comment type="subcellular location">
    <subcellularLocation>
        <location evidence="1">Virion</location>
    </subcellularLocation>
    <subcellularLocation>
        <location evidence="1">Host nucleus</location>
    </subcellularLocation>
</comment>
<comment type="similarity">
    <text evidence="1">Belongs to the influenza viruses PB2 family.</text>
</comment>
<keyword id="KW-1157">Cap snatching</keyword>
<keyword id="KW-1262">Eukaryotic host gene expression shutoff by virus</keyword>
<keyword id="KW-1191">Eukaryotic host transcription shutoff by virus</keyword>
<keyword id="KW-1190">Host gene expression shutoff by virus</keyword>
<keyword id="KW-1048">Host nucleus</keyword>
<keyword id="KW-0945">Host-virus interaction</keyword>
<keyword id="KW-1104">Inhibition of host RNA polymerase II by virus</keyword>
<keyword id="KW-0506">mRNA capping</keyword>
<keyword id="KW-0507">mRNA processing</keyword>
<keyword id="KW-1195">Viral transcription</keyword>
<keyword id="KW-0946">Virion</keyword>
<feature type="chain" id="PRO_0000279625" description="Polymerase basic protein 2">
    <location>
        <begin position="1"/>
        <end position="759"/>
    </location>
</feature>
<feature type="short sequence motif" description="Nuclear localization signal" evidence="1">
    <location>
        <begin position="736"/>
        <end position="739"/>
    </location>
</feature>
<feature type="site" description="Avian adaptation" evidence="1">
    <location>
        <position position="627"/>
    </location>
</feature>
<sequence>MERIKELRDLMSQSRTREILTKTTVDHMAIIKKYTSGRQEKNPALRMKWMMAMKYPITADKRIMEMIPERNEQGQTLWSKTNDAGSDRVMVSPLAVTWWNRNGPTTSTVHYPKVYKTYFEKVERLKHGTFGPVHFRNQVKIRRRVDINPGHADLSAKEAQDVIMEVVFPNEVGARILTSESQLTITREKKEELQDCKIAPLMVAYMLERELVRKTRFLPVAGGTSSVYIEVLHLTQGTCWEQMYTPGGEVRNDDVDQSLIIAARNIVRRATVSADPLASLLEMCHSTQIGGVRMVDILRQNPTEEQAVDICKAAMGLRISSSFSFGGFTFKRTSGSSIKKEEEVLTGNLQTLKIRVHEGYEEFTMVGRRATAILRKSTKRLVQLIVSGRDEQSIAEAIIVAMVFSQEDCMIKAVRGDLNFVNRANQRLNPMHQLLRHFQKDAKVLFQNWGIEPIDNVMGMIGILPDMTPSTEMSLRGVRVSKMGVDEYSSTERVVVSIDRFLRVRDQRGNILLSPEEVSETQGTEKLTITYSSSMMWEINGPESVLVNTYQWIIRNWEAVKIQWSQDPTMLYNKMEFEPFQSLVPKAARGQYSGFVRTLFQQMRDVLGTFDTVQIIKLLPFAAAPPEQSRMQFSSLTVNVRGSGMRILVRGNSPVFNYNKATKRLTVLGKDAGALTEDPDEGTAGVESAVLRGFLILGKEDKRYGPALSINELSNLAKGEKANVLIGQGDVVLVMKRKRDSSILTDSQTATKRIRMAIN</sequence>